<keyword id="KW-0963">Cytoplasm</keyword>
<keyword id="KW-0206">Cytoskeleton</keyword>
<keyword id="KW-0597">Phosphoprotein</keyword>
<keyword id="KW-1185">Reference proteome</keyword>
<gene>
    <name type="primary">TSGA10</name>
    <name type="ORF">QtsA-17006</name>
</gene>
<evidence type="ECO:0000250" key="1"/>
<evidence type="ECO:0000250" key="2">
    <source>
        <dbReference type="UniProtKB" id="Q6NY15"/>
    </source>
</evidence>
<evidence type="ECO:0000250" key="3">
    <source>
        <dbReference type="UniProtKB" id="Q9BZW7"/>
    </source>
</evidence>
<evidence type="ECO:0000250" key="4">
    <source>
        <dbReference type="UniProtKB" id="Q9Z220"/>
    </source>
</evidence>
<evidence type="ECO:0000256" key="5">
    <source>
        <dbReference type="SAM" id="MobiDB-lite"/>
    </source>
</evidence>
<evidence type="ECO:0000305" key="6"/>
<feature type="chain" id="PRO_0000307126" description="Testis-specific gene 10 protein">
    <location>
        <begin position="1"/>
        <end position="601"/>
    </location>
</feature>
<feature type="region of interest" description="Disordered" evidence="5">
    <location>
        <begin position="1"/>
        <end position="20"/>
    </location>
</feature>
<feature type="region of interest" description="Interaction with HIF1A" evidence="1">
    <location>
        <begin position="459"/>
        <end position="592"/>
    </location>
</feature>
<feature type="region of interest" description="Disordered" evidence="5">
    <location>
        <begin position="563"/>
        <end position="588"/>
    </location>
</feature>
<feature type="compositionally biased region" description="Basic residues" evidence="5">
    <location>
        <begin position="1"/>
        <end position="10"/>
    </location>
</feature>
<feature type="compositionally biased region" description="Polar residues" evidence="5">
    <location>
        <begin position="563"/>
        <end position="573"/>
    </location>
</feature>
<feature type="compositionally biased region" description="Basic and acidic residues" evidence="5">
    <location>
        <begin position="574"/>
        <end position="588"/>
    </location>
</feature>
<feature type="modified residue" description="Phosphoserine" evidence="4">
    <location>
        <position position="591"/>
    </location>
</feature>
<name>TSG10_MACFA</name>
<accession>Q4R6W3</accession>
<proteinExistence type="evidence at transcript level"/>
<dbReference type="EMBL" id="AB169067">
    <property type="protein sequence ID" value="BAE01161.1"/>
    <property type="molecule type" value="mRNA"/>
</dbReference>
<dbReference type="SMR" id="Q4R6W3"/>
<dbReference type="STRING" id="9541.ENSMFAP00000022560"/>
<dbReference type="Proteomes" id="UP000233100">
    <property type="component" value="Unplaced"/>
</dbReference>
<dbReference type="GO" id="GO:0005814">
    <property type="term" value="C:centriole"/>
    <property type="evidence" value="ECO:0007669"/>
    <property type="project" value="UniProtKB-SubCell"/>
</dbReference>
<dbReference type="GO" id="GO:0005737">
    <property type="term" value="C:cytoplasm"/>
    <property type="evidence" value="ECO:0007669"/>
    <property type="project" value="UniProtKB-SubCell"/>
</dbReference>
<dbReference type="InterPro" id="IPR051877">
    <property type="entry name" value="Centriole_BasalBody_StrucProt"/>
</dbReference>
<dbReference type="PANTHER" id="PTHR20544">
    <property type="entry name" value="CENTROSOMAL PROTEIN CEP135"/>
    <property type="match status" value="1"/>
</dbReference>
<dbReference type="PANTHER" id="PTHR20544:SF2">
    <property type="entry name" value="TESTIS SPECIFIC 10"/>
    <property type="match status" value="1"/>
</dbReference>
<dbReference type="SUPFAM" id="SSF57997">
    <property type="entry name" value="Tropomyosin"/>
    <property type="match status" value="1"/>
</dbReference>
<sequence length="601" mass="69906">MMRSRSKSPRRPSPTARGANCDVELLKTTTRDREELKCMLEKYERHLAEIQGNVKVLTSERDKTFLLYEQAQEEIARLRREMKSLARKAMDTESELGRQKAENNSLRLLYENTEKDLSDTQRHLAKKKYELQLTQEKIMCLDEKIDNFTRQNIAQREEISILGGTLNDLAKEKECLQACLDKKSENIASLGESLAMKEKTISGMKNIIAEMEQASRQSTEALIMCEQDISRMRRQLDETNDELAQIARERDILAHDNDNLQEQFAKAKQENQALSKKLNDTHNELNDIKQKVQDTNLEVNKLKNILKSEESENRQMMEQLRKANEDAENWENKARQSEADNNTLKLELITAEAEGNRLKEKVDSLSREVEQHLNAERSYKSQISTLHKSVVKMEEELQKVQFEKVSALADLSSTRELCIKLDSSKELLNRQLVAKDQEIEMMENELDSARSEIELLRSQMTNERISMQNLEALLVANRDKEYQSQIALQEKESEIQLLKEHLCLAENKMAIQSRDVAQFRNVVTQLEADLDITKRQLGTERFERERAVQELRRQNYSSNAYHVSSTMKPNTKCHSPERAHHRSPDRGLDRSLEENLCYRDF</sequence>
<organism>
    <name type="scientific">Macaca fascicularis</name>
    <name type="common">Crab-eating macaque</name>
    <name type="synonym">Cynomolgus monkey</name>
    <dbReference type="NCBI Taxonomy" id="9541"/>
    <lineage>
        <taxon>Eukaryota</taxon>
        <taxon>Metazoa</taxon>
        <taxon>Chordata</taxon>
        <taxon>Craniata</taxon>
        <taxon>Vertebrata</taxon>
        <taxon>Euteleostomi</taxon>
        <taxon>Mammalia</taxon>
        <taxon>Eutheria</taxon>
        <taxon>Euarchontoglires</taxon>
        <taxon>Primates</taxon>
        <taxon>Haplorrhini</taxon>
        <taxon>Catarrhini</taxon>
        <taxon>Cercopithecidae</taxon>
        <taxon>Cercopithecinae</taxon>
        <taxon>Macaca</taxon>
    </lineage>
</organism>
<reference key="1">
    <citation type="submission" date="2005-06" db="EMBL/GenBank/DDBJ databases">
        <title>DNA sequences of macaque genes expressed in brain or testis and its evolutionary implications.</title>
        <authorList>
            <consortium name="International consortium for macaque cDNA sequencing and analysis"/>
        </authorList>
    </citation>
    <scope>NUCLEOTIDE SEQUENCE [LARGE SCALE MRNA]</scope>
    <source>
        <tissue>Testis</tissue>
    </source>
</reference>
<protein>
    <recommendedName>
        <fullName>Testis-specific gene 10 protein</fullName>
    </recommendedName>
</protein>
<comment type="function">
    <text evidence="2 3">Plays a role in spermatogenesis (By similarity). When overexpressed, prevents nuclear localization of HIF1A (By similarity).</text>
</comment>
<comment type="subunit">
    <text evidence="2">Interacts with HIF1A.</text>
</comment>
<comment type="subcellular location">
    <subcellularLocation>
        <location evidence="4">Cytoplasm</location>
    </subcellularLocation>
    <subcellularLocation>
        <location evidence="3">Cytoplasm</location>
        <location evidence="3">Cytoskeleton</location>
        <location evidence="3">Microtubule organizing center</location>
        <location evidence="3">Centrosome</location>
        <location evidence="3">Centriole</location>
    </subcellularLocation>
    <text evidence="3 4">In mature spermatozoa, localizes to the centriole and midpiece (By similarity). The 27-kDa peptide associates with the fibrous sheath in mature spermatozoa and localizes to the principal piece of sperm tail, while the 55-kDa peptide localizes to the midpiece. Detected in the cytoplasm of almost all spermatogonial cells within the seminiferous tubules (By similarity).</text>
</comment>
<comment type="PTM">
    <text evidence="2">Processed into N-terminal 27-kDa and C-terminal 55-kDa fragments.</text>
</comment>
<comment type="similarity">
    <text evidence="6">Belongs to the CEP135/TSGA10 family.</text>
</comment>